<protein>
    <recommendedName>
        <fullName>Olfactory receptor 10Z1</fullName>
    </recommendedName>
    <alternativeName>
        <fullName>Olfactory receptor OR1-15</fullName>
    </alternativeName>
</protein>
<organism>
    <name type="scientific">Homo sapiens</name>
    <name type="common">Human</name>
    <dbReference type="NCBI Taxonomy" id="9606"/>
    <lineage>
        <taxon>Eukaryota</taxon>
        <taxon>Metazoa</taxon>
        <taxon>Chordata</taxon>
        <taxon>Craniata</taxon>
        <taxon>Vertebrata</taxon>
        <taxon>Euteleostomi</taxon>
        <taxon>Mammalia</taxon>
        <taxon>Eutheria</taxon>
        <taxon>Euarchontoglires</taxon>
        <taxon>Primates</taxon>
        <taxon>Haplorrhini</taxon>
        <taxon>Catarrhini</taxon>
        <taxon>Hominidae</taxon>
        <taxon>Homo</taxon>
    </lineage>
</organism>
<reference key="1">
    <citation type="submission" date="2001-07" db="EMBL/GenBank/DDBJ databases">
        <title>Genome-wide discovery and analysis of human seven transmembrane helix receptor genes.</title>
        <authorList>
            <person name="Suwa M."/>
            <person name="Sato T."/>
            <person name="Okouchi I."/>
            <person name="Arita M."/>
            <person name="Futami K."/>
            <person name="Matsumoto S."/>
            <person name="Tsutsumi S."/>
            <person name="Aburatani H."/>
            <person name="Asai K."/>
            <person name="Akiyama Y."/>
        </authorList>
    </citation>
    <scope>NUCLEOTIDE SEQUENCE [GENOMIC DNA]</scope>
</reference>
<reference key="2">
    <citation type="journal article" date="2006" name="Nature">
        <title>The DNA sequence and biological annotation of human chromosome 1.</title>
        <authorList>
            <person name="Gregory S.G."/>
            <person name="Barlow K.F."/>
            <person name="McLay K.E."/>
            <person name="Kaul R."/>
            <person name="Swarbreck D."/>
            <person name="Dunham A."/>
            <person name="Scott C.E."/>
            <person name="Howe K.L."/>
            <person name="Woodfine K."/>
            <person name="Spencer C.C.A."/>
            <person name="Jones M.C."/>
            <person name="Gillson C."/>
            <person name="Searle S."/>
            <person name="Zhou Y."/>
            <person name="Kokocinski F."/>
            <person name="McDonald L."/>
            <person name="Evans R."/>
            <person name="Phillips K."/>
            <person name="Atkinson A."/>
            <person name="Cooper R."/>
            <person name="Jones C."/>
            <person name="Hall R.E."/>
            <person name="Andrews T.D."/>
            <person name="Lloyd C."/>
            <person name="Ainscough R."/>
            <person name="Almeida J.P."/>
            <person name="Ambrose K.D."/>
            <person name="Anderson F."/>
            <person name="Andrew R.W."/>
            <person name="Ashwell R.I.S."/>
            <person name="Aubin K."/>
            <person name="Babbage A.K."/>
            <person name="Bagguley C.L."/>
            <person name="Bailey J."/>
            <person name="Beasley H."/>
            <person name="Bethel G."/>
            <person name="Bird C.P."/>
            <person name="Bray-Allen S."/>
            <person name="Brown J.Y."/>
            <person name="Brown A.J."/>
            <person name="Buckley D."/>
            <person name="Burton J."/>
            <person name="Bye J."/>
            <person name="Carder C."/>
            <person name="Chapman J.C."/>
            <person name="Clark S.Y."/>
            <person name="Clarke G."/>
            <person name="Clee C."/>
            <person name="Cobley V."/>
            <person name="Collier R.E."/>
            <person name="Corby N."/>
            <person name="Coville G.J."/>
            <person name="Davies J."/>
            <person name="Deadman R."/>
            <person name="Dunn M."/>
            <person name="Earthrowl M."/>
            <person name="Ellington A.G."/>
            <person name="Errington H."/>
            <person name="Frankish A."/>
            <person name="Frankland J."/>
            <person name="French L."/>
            <person name="Garner P."/>
            <person name="Garnett J."/>
            <person name="Gay L."/>
            <person name="Ghori M.R.J."/>
            <person name="Gibson R."/>
            <person name="Gilby L.M."/>
            <person name="Gillett W."/>
            <person name="Glithero R.J."/>
            <person name="Grafham D.V."/>
            <person name="Griffiths C."/>
            <person name="Griffiths-Jones S."/>
            <person name="Grocock R."/>
            <person name="Hammond S."/>
            <person name="Harrison E.S.I."/>
            <person name="Hart E."/>
            <person name="Haugen E."/>
            <person name="Heath P.D."/>
            <person name="Holmes S."/>
            <person name="Holt K."/>
            <person name="Howden P.J."/>
            <person name="Hunt A.R."/>
            <person name="Hunt S.E."/>
            <person name="Hunter G."/>
            <person name="Isherwood J."/>
            <person name="James R."/>
            <person name="Johnson C."/>
            <person name="Johnson D."/>
            <person name="Joy A."/>
            <person name="Kay M."/>
            <person name="Kershaw J.K."/>
            <person name="Kibukawa M."/>
            <person name="Kimberley A.M."/>
            <person name="King A."/>
            <person name="Knights A.J."/>
            <person name="Lad H."/>
            <person name="Laird G."/>
            <person name="Lawlor S."/>
            <person name="Leongamornlert D.A."/>
            <person name="Lloyd D.M."/>
            <person name="Loveland J."/>
            <person name="Lovell J."/>
            <person name="Lush M.J."/>
            <person name="Lyne R."/>
            <person name="Martin S."/>
            <person name="Mashreghi-Mohammadi M."/>
            <person name="Matthews L."/>
            <person name="Matthews N.S.W."/>
            <person name="McLaren S."/>
            <person name="Milne S."/>
            <person name="Mistry S."/>
            <person name="Moore M.J.F."/>
            <person name="Nickerson T."/>
            <person name="O'Dell C.N."/>
            <person name="Oliver K."/>
            <person name="Palmeiri A."/>
            <person name="Palmer S.A."/>
            <person name="Parker A."/>
            <person name="Patel D."/>
            <person name="Pearce A.V."/>
            <person name="Peck A.I."/>
            <person name="Pelan S."/>
            <person name="Phelps K."/>
            <person name="Phillimore B.J."/>
            <person name="Plumb R."/>
            <person name="Rajan J."/>
            <person name="Raymond C."/>
            <person name="Rouse G."/>
            <person name="Saenphimmachak C."/>
            <person name="Sehra H.K."/>
            <person name="Sheridan E."/>
            <person name="Shownkeen R."/>
            <person name="Sims S."/>
            <person name="Skuce C.D."/>
            <person name="Smith M."/>
            <person name="Steward C."/>
            <person name="Subramanian S."/>
            <person name="Sycamore N."/>
            <person name="Tracey A."/>
            <person name="Tromans A."/>
            <person name="Van Helmond Z."/>
            <person name="Wall M."/>
            <person name="Wallis J.M."/>
            <person name="White S."/>
            <person name="Whitehead S.L."/>
            <person name="Wilkinson J.E."/>
            <person name="Willey D.L."/>
            <person name="Williams H."/>
            <person name="Wilming L."/>
            <person name="Wray P.W."/>
            <person name="Wu Z."/>
            <person name="Coulson A."/>
            <person name="Vaudin M."/>
            <person name="Sulston J.E."/>
            <person name="Durbin R.M."/>
            <person name="Hubbard T."/>
            <person name="Wooster R."/>
            <person name="Dunham I."/>
            <person name="Carter N.P."/>
            <person name="McVean G."/>
            <person name="Ross M.T."/>
            <person name="Harrow J."/>
            <person name="Olson M.V."/>
            <person name="Beck S."/>
            <person name="Rogers J."/>
            <person name="Bentley D.R."/>
        </authorList>
    </citation>
    <scope>NUCLEOTIDE SEQUENCE [LARGE SCALE GENOMIC DNA]</scope>
</reference>
<reference key="3">
    <citation type="submission" date="2005-09" db="EMBL/GenBank/DDBJ databases">
        <authorList>
            <person name="Mural R.J."/>
            <person name="Istrail S."/>
            <person name="Sutton G.G."/>
            <person name="Florea L."/>
            <person name="Halpern A.L."/>
            <person name="Mobarry C.M."/>
            <person name="Lippert R."/>
            <person name="Walenz B."/>
            <person name="Shatkay H."/>
            <person name="Dew I."/>
            <person name="Miller J.R."/>
            <person name="Flanigan M.J."/>
            <person name="Edwards N.J."/>
            <person name="Bolanos R."/>
            <person name="Fasulo D."/>
            <person name="Halldorsson B.V."/>
            <person name="Hannenhalli S."/>
            <person name="Turner R."/>
            <person name="Yooseph S."/>
            <person name="Lu F."/>
            <person name="Nusskern D.R."/>
            <person name="Shue B.C."/>
            <person name="Zheng X.H."/>
            <person name="Zhong F."/>
            <person name="Delcher A.L."/>
            <person name="Huson D.H."/>
            <person name="Kravitz S.A."/>
            <person name="Mouchard L."/>
            <person name="Reinert K."/>
            <person name="Remington K.A."/>
            <person name="Clark A.G."/>
            <person name="Waterman M.S."/>
            <person name="Eichler E.E."/>
            <person name="Adams M.D."/>
            <person name="Hunkapiller M.W."/>
            <person name="Myers E.W."/>
            <person name="Venter J.C."/>
        </authorList>
    </citation>
    <scope>NUCLEOTIDE SEQUENCE [LARGE SCALE GENOMIC DNA]</scope>
    <scope>VARIANT THR-294</scope>
</reference>
<reference key="4">
    <citation type="journal article" date="2004" name="Proc. Natl. Acad. Sci. U.S.A.">
        <title>The human olfactory receptor gene family.</title>
        <authorList>
            <person name="Malnic B."/>
            <person name="Godfrey P.A."/>
            <person name="Buck L.B."/>
        </authorList>
    </citation>
    <scope>IDENTIFICATION</scope>
</reference>
<reference key="5">
    <citation type="journal article" date="2004" name="Proc. Natl. Acad. Sci. U.S.A.">
        <authorList>
            <person name="Malnic B."/>
            <person name="Godfrey P.A."/>
            <person name="Buck L.B."/>
        </authorList>
    </citation>
    <scope>ERRATUM OF PUBMED:14983052</scope>
</reference>
<name>O10Z1_HUMAN</name>
<evidence type="ECO:0000255" key="1"/>
<evidence type="ECO:0000255" key="2">
    <source>
        <dbReference type="PROSITE-ProRule" id="PRU00521"/>
    </source>
</evidence>
<evidence type="ECO:0000269" key="3">
    <source ref="3"/>
</evidence>
<evidence type="ECO:0000305" key="4"/>
<feature type="chain" id="PRO_0000150721" description="Olfactory receptor 10Z1">
    <location>
        <begin position="1"/>
        <end position="313"/>
    </location>
</feature>
<feature type="topological domain" description="Extracellular" evidence="1">
    <location>
        <begin position="1"/>
        <end position="25"/>
    </location>
</feature>
<feature type="transmembrane region" description="Helical; Name=1" evidence="1">
    <location>
        <begin position="26"/>
        <end position="46"/>
    </location>
</feature>
<feature type="topological domain" description="Cytoplasmic" evidence="1">
    <location>
        <begin position="47"/>
        <end position="54"/>
    </location>
</feature>
<feature type="transmembrane region" description="Helical; Name=2" evidence="1">
    <location>
        <begin position="55"/>
        <end position="75"/>
    </location>
</feature>
<feature type="topological domain" description="Extracellular" evidence="1">
    <location>
        <begin position="76"/>
        <end position="99"/>
    </location>
</feature>
<feature type="transmembrane region" description="Helical; Name=3" evidence="1">
    <location>
        <begin position="100"/>
        <end position="120"/>
    </location>
</feature>
<feature type="topological domain" description="Cytoplasmic" evidence="1">
    <location>
        <begin position="121"/>
        <end position="139"/>
    </location>
</feature>
<feature type="transmembrane region" description="Helical; Name=4" evidence="1">
    <location>
        <begin position="140"/>
        <end position="160"/>
    </location>
</feature>
<feature type="topological domain" description="Extracellular" evidence="1">
    <location>
        <begin position="161"/>
        <end position="197"/>
    </location>
</feature>
<feature type="transmembrane region" description="Helical; Name=5" evidence="1">
    <location>
        <begin position="198"/>
        <end position="217"/>
    </location>
</feature>
<feature type="topological domain" description="Cytoplasmic" evidence="1">
    <location>
        <begin position="218"/>
        <end position="237"/>
    </location>
</feature>
<feature type="transmembrane region" description="Helical; Name=6" evidence="1">
    <location>
        <begin position="238"/>
        <end position="258"/>
    </location>
</feature>
<feature type="topological domain" description="Extracellular" evidence="1">
    <location>
        <begin position="259"/>
        <end position="271"/>
    </location>
</feature>
<feature type="transmembrane region" description="Helical; Name=7" evidence="1">
    <location>
        <begin position="272"/>
        <end position="292"/>
    </location>
</feature>
<feature type="topological domain" description="Cytoplasmic" evidence="1">
    <location>
        <begin position="293"/>
        <end position="313"/>
    </location>
</feature>
<feature type="glycosylation site" description="N-linked (GlcNAc...) asparagine" evidence="1">
    <location>
        <position position="5"/>
    </location>
</feature>
<feature type="disulfide bond" evidence="2">
    <location>
        <begin position="97"/>
        <end position="189"/>
    </location>
</feature>
<feature type="sequence variant" id="VAR_034297" description="In dbSNP:rs857685." evidence="3">
    <original>N</original>
    <variation>T</variation>
    <location>
        <position position="294"/>
    </location>
</feature>
<accession>Q8NGY1</accession>
<accession>Q5VYL0</accession>
<accession>Q6IFR7</accession>
<dbReference type="EMBL" id="AB065635">
    <property type="protein sequence ID" value="BAC05861.1"/>
    <property type="molecule type" value="Genomic_DNA"/>
</dbReference>
<dbReference type="EMBL" id="AL353894">
    <property type="status" value="NOT_ANNOTATED_CDS"/>
    <property type="molecule type" value="Genomic_DNA"/>
</dbReference>
<dbReference type="EMBL" id="CH471121">
    <property type="protein sequence ID" value="EAW52820.1"/>
    <property type="molecule type" value="Genomic_DNA"/>
</dbReference>
<dbReference type="EMBL" id="BK004195">
    <property type="protein sequence ID" value="DAA04593.1"/>
    <property type="molecule type" value="Genomic_DNA"/>
</dbReference>
<dbReference type="CCDS" id="CCDS30901.1"/>
<dbReference type="RefSeq" id="NP_001004478.1">
    <property type="nucleotide sequence ID" value="NM_001004478.2"/>
</dbReference>
<dbReference type="SMR" id="Q8NGY1"/>
<dbReference type="FunCoup" id="Q8NGY1">
    <property type="interactions" value="416"/>
</dbReference>
<dbReference type="STRING" id="9606.ENSP00000493003"/>
<dbReference type="GlyCosmos" id="Q8NGY1">
    <property type="glycosylation" value="1 site, No reported glycans"/>
</dbReference>
<dbReference type="GlyGen" id="Q8NGY1">
    <property type="glycosylation" value="1 site"/>
</dbReference>
<dbReference type="iPTMnet" id="Q8NGY1"/>
<dbReference type="PhosphoSitePlus" id="Q8NGY1"/>
<dbReference type="BioMuta" id="OR10Z1"/>
<dbReference type="DMDM" id="38372785"/>
<dbReference type="PaxDb" id="9606-ENSP00000354707"/>
<dbReference type="PeptideAtlas" id="Q8NGY1"/>
<dbReference type="ProteomicsDB" id="73622"/>
<dbReference type="Antibodypedia" id="57098">
    <property type="antibodies" value="101 antibodies from 21 providers"/>
</dbReference>
<dbReference type="DNASU" id="128368"/>
<dbReference type="Ensembl" id="ENST00000641002.1">
    <property type="protein sequence ID" value="ENSP00000493003.1"/>
    <property type="gene ID" value="ENSG00000198967.5"/>
</dbReference>
<dbReference type="GeneID" id="128368"/>
<dbReference type="KEGG" id="hsa:128368"/>
<dbReference type="MANE-Select" id="ENST00000641002.1">
    <property type="protein sequence ID" value="ENSP00000493003.1"/>
    <property type="RefSeq nucleotide sequence ID" value="NM_001004478.2"/>
    <property type="RefSeq protein sequence ID" value="NP_001004478.1"/>
</dbReference>
<dbReference type="UCSC" id="uc010pio.2">
    <property type="organism name" value="human"/>
</dbReference>
<dbReference type="AGR" id="HGNC:14996"/>
<dbReference type="CTD" id="128368"/>
<dbReference type="DisGeNET" id="128368"/>
<dbReference type="GeneCards" id="OR10Z1"/>
<dbReference type="HGNC" id="HGNC:14996">
    <property type="gene designation" value="OR10Z1"/>
</dbReference>
<dbReference type="HPA" id="ENSG00000198967">
    <property type="expression patterns" value="Tissue enriched (bone)"/>
</dbReference>
<dbReference type="neXtProt" id="NX_Q8NGY1"/>
<dbReference type="OpenTargets" id="ENSG00000198967"/>
<dbReference type="PharmGKB" id="PA32009"/>
<dbReference type="VEuPathDB" id="HostDB:ENSG00000198967"/>
<dbReference type="eggNOG" id="ENOG502T9AF">
    <property type="taxonomic scope" value="Eukaryota"/>
</dbReference>
<dbReference type="GeneTree" id="ENSGT00940000162983"/>
<dbReference type="HOGENOM" id="CLU_012526_1_0_1"/>
<dbReference type="InParanoid" id="Q8NGY1"/>
<dbReference type="OMA" id="RMNPTLC"/>
<dbReference type="OrthoDB" id="9975554at2759"/>
<dbReference type="PAN-GO" id="Q8NGY1">
    <property type="GO annotations" value="4 GO annotations based on evolutionary models"/>
</dbReference>
<dbReference type="PhylomeDB" id="Q8NGY1"/>
<dbReference type="TreeFam" id="TF337249"/>
<dbReference type="PathwayCommons" id="Q8NGY1"/>
<dbReference type="Reactome" id="R-HSA-9752946">
    <property type="pathway name" value="Expression and translocation of olfactory receptors"/>
</dbReference>
<dbReference type="BioGRID-ORCS" id="128368">
    <property type="hits" value="47 hits in 750 CRISPR screens"/>
</dbReference>
<dbReference type="GeneWiki" id="OR10Z1"/>
<dbReference type="GenomeRNAi" id="128368"/>
<dbReference type="Pharos" id="Q8NGY1">
    <property type="development level" value="Tdark"/>
</dbReference>
<dbReference type="PRO" id="PR:Q8NGY1"/>
<dbReference type="Proteomes" id="UP000005640">
    <property type="component" value="Chromosome 1"/>
</dbReference>
<dbReference type="RNAct" id="Q8NGY1">
    <property type="molecule type" value="protein"/>
</dbReference>
<dbReference type="Bgee" id="ENSG00000198967">
    <property type="expression patterns" value="Expressed in male germ line stem cell (sensu Vertebrata) in testis and 27 other cell types or tissues"/>
</dbReference>
<dbReference type="ExpressionAtlas" id="Q8NGY1">
    <property type="expression patterns" value="baseline and differential"/>
</dbReference>
<dbReference type="GO" id="GO:0016020">
    <property type="term" value="C:membrane"/>
    <property type="evidence" value="ECO:0000318"/>
    <property type="project" value="GO_Central"/>
</dbReference>
<dbReference type="GO" id="GO:0005886">
    <property type="term" value="C:plasma membrane"/>
    <property type="evidence" value="ECO:0007669"/>
    <property type="project" value="UniProtKB-SubCell"/>
</dbReference>
<dbReference type="GO" id="GO:0004930">
    <property type="term" value="F:G protein-coupled receptor activity"/>
    <property type="evidence" value="ECO:0007669"/>
    <property type="project" value="UniProtKB-KW"/>
</dbReference>
<dbReference type="GO" id="GO:0005549">
    <property type="term" value="F:odorant binding"/>
    <property type="evidence" value="ECO:0000318"/>
    <property type="project" value="GO_Central"/>
</dbReference>
<dbReference type="GO" id="GO:0004984">
    <property type="term" value="F:olfactory receptor activity"/>
    <property type="evidence" value="ECO:0000318"/>
    <property type="project" value="GO_Central"/>
</dbReference>
<dbReference type="GO" id="GO:0050911">
    <property type="term" value="P:detection of chemical stimulus involved in sensory perception of smell"/>
    <property type="evidence" value="ECO:0000318"/>
    <property type="project" value="GO_Central"/>
</dbReference>
<dbReference type="CDD" id="cd15225">
    <property type="entry name" value="7tmA_OR10A-like"/>
    <property type="match status" value="1"/>
</dbReference>
<dbReference type="FunFam" id="1.20.1070.10:FF:000001">
    <property type="entry name" value="Olfactory receptor"/>
    <property type="match status" value="1"/>
</dbReference>
<dbReference type="Gene3D" id="1.20.1070.10">
    <property type="entry name" value="Rhodopsin 7-helix transmembrane proteins"/>
    <property type="match status" value="1"/>
</dbReference>
<dbReference type="InterPro" id="IPR000276">
    <property type="entry name" value="GPCR_Rhodpsn"/>
</dbReference>
<dbReference type="InterPro" id="IPR017452">
    <property type="entry name" value="GPCR_Rhodpsn_7TM"/>
</dbReference>
<dbReference type="InterPro" id="IPR000725">
    <property type="entry name" value="Olfact_rcpt"/>
</dbReference>
<dbReference type="PANTHER" id="PTHR26453">
    <property type="entry name" value="OLFACTORY RECEPTOR"/>
    <property type="match status" value="1"/>
</dbReference>
<dbReference type="Pfam" id="PF13853">
    <property type="entry name" value="7tm_4"/>
    <property type="match status" value="1"/>
</dbReference>
<dbReference type="PRINTS" id="PR00237">
    <property type="entry name" value="GPCRRHODOPSN"/>
</dbReference>
<dbReference type="PRINTS" id="PR00245">
    <property type="entry name" value="OLFACTORYR"/>
</dbReference>
<dbReference type="SUPFAM" id="SSF81321">
    <property type="entry name" value="Family A G protein-coupled receptor-like"/>
    <property type="match status" value="1"/>
</dbReference>
<dbReference type="PROSITE" id="PS00237">
    <property type="entry name" value="G_PROTEIN_RECEP_F1_1"/>
    <property type="match status" value="1"/>
</dbReference>
<dbReference type="PROSITE" id="PS50262">
    <property type="entry name" value="G_PROTEIN_RECEP_F1_2"/>
    <property type="match status" value="1"/>
</dbReference>
<keyword id="KW-1003">Cell membrane</keyword>
<keyword id="KW-1015">Disulfide bond</keyword>
<keyword id="KW-0297">G-protein coupled receptor</keyword>
<keyword id="KW-0325">Glycoprotein</keyword>
<keyword id="KW-0472">Membrane</keyword>
<keyword id="KW-0552">Olfaction</keyword>
<keyword id="KW-0675">Receptor</keyword>
<keyword id="KW-1185">Reference proteome</keyword>
<keyword id="KW-0716">Sensory transduction</keyword>
<keyword id="KW-0807">Transducer</keyword>
<keyword id="KW-0812">Transmembrane</keyword>
<keyword id="KW-1133">Transmembrane helix</keyword>
<sequence>MGQTNVTSWRDFVFLGFSSSGELQLLLFALFLSLYLVTLTSNVFIIIAIRLDSHLHTPMYLFLSFLSFSETCYTLGIIPRMLSGLAGGDQAISYVGCAAQMFFSASWACTNCFLLAAMGFDRYVAICAPLHYASHMNPTLCAQLVITSFLTGYLFGLGMTLVIFHLSFCSSHEIQHFFCDTPPVLSLACGDTGPSELRIFILSLLVLLVSFFFITISYAYILAAILRIPSAEGQKKAFSTCASHLTVVIIHYGCASFVYLRPKASYSLERDQLIAMTYTVVTPLLNPIVYSLRNRAIQTALRNAFRGRLLGKG</sequence>
<proteinExistence type="inferred from homology"/>
<gene>
    <name type="primary">OR10Z1</name>
</gene>
<comment type="function">
    <text evidence="4">Odorant receptor.</text>
</comment>
<comment type="subcellular location">
    <subcellularLocation>
        <location>Cell membrane</location>
        <topology>Multi-pass membrane protein</topology>
    </subcellularLocation>
</comment>
<comment type="similarity">
    <text evidence="2">Belongs to the G-protein coupled receptor 1 family.</text>
</comment>
<comment type="online information" name="Human Olfactory Receptor Data Exploratorium (HORDE)">
    <link uri="http://genome.weizmann.ac.il/horde/card/index/symbol:OR10Z1"/>
</comment>